<proteinExistence type="inferred from homology"/>
<accession>P9WMZ0</accession>
<accession>L0T8Z4</accession>
<accession>O05313</accession>
<accession>Q7D8L6</accession>
<gene>
    <name evidence="1" type="primary">glgM</name>
    <name type="synonym">glgA</name>
    <name type="ordered locus">MT1250</name>
</gene>
<comment type="function">
    <text evidence="1">Involved in the biosynthesis of the maltose-1-phosphate (M1P) building block required for alpha-glucan production by the key enzyme GlgE. Catalyzes the formation of an alpha-1,4 linkage between glucose from ADP-glucose and glucose 1-phosphate (G1P) to yield maltose-1-phosphate (M1P).</text>
</comment>
<comment type="catalytic activity">
    <reaction evidence="1">
        <text>ADP-alpha-D-glucose + alpha-D-glucose 1-phosphate = alpha-maltose 1-phosphate + ADP + H(+)</text>
        <dbReference type="Rhea" id="RHEA:50692"/>
        <dbReference type="ChEBI" id="CHEBI:15378"/>
        <dbReference type="ChEBI" id="CHEBI:57498"/>
        <dbReference type="ChEBI" id="CHEBI:58601"/>
        <dbReference type="ChEBI" id="CHEBI:63576"/>
        <dbReference type="ChEBI" id="CHEBI:456216"/>
        <dbReference type="EC" id="2.4.1.342"/>
    </reaction>
</comment>
<comment type="pathway">
    <text evidence="1">Capsule biogenesis; capsule polysaccharide biosynthesis.</text>
</comment>
<comment type="pathway">
    <text evidence="1">Glycan biosynthesis; glycogen biosynthesis.</text>
</comment>
<comment type="miscellaneous">
    <text evidence="1">Maltose-1-phosphate (M1P) is generated by two alternative routes: the TreS-Pep2 branch and the GlgC-GlgM branch, however it seems that TreS-Pep2 branch provides most of M1P for the GlgE pathway in M.tuberculosis.</text>
</comment>
<comment type="similarity">
    <text evidence="2">Belongs to the glycosyltransferase group 1 family.</text>
</comment>
<organism>
    <name type="scientific">Mycobacterium tuberculosis (strain CDC 1551 / Oshkosh)</name>
    <dbReference type="NCBI Taxonomy" id="83331"/>
    <lineage>
        <taxon>Bacteria</taxon>
        <taxon>Bacillati</taxon>
        <taxon>Actinomycetota</taxon>
        <taxon>Actinomycetes</taxon>
        <taxon>Mycobacteriales</taxon>
        <taxon>Mycobacteriaceae</taxon>
        <taxon>Mycobacterium</taxon>
        <taxon>Mycobacterium tuberculosis complex</taxon>
    </lineage>
</organism>
<keyword id="KW-0972">Capsule biogenesis/degradation</keyword>
<keyword id="KW-0119">Carbohydrate metabolism</keyword>
<keyword id="KW-0328">Glycosyltransferase</keyword>
<keyword id="KW-1185">Reference proteome</keyword>
<keyword id="KW-0808">Transferase</keyword>
<name>GLGM_MYCTO</name>
<sequence>MRVAMLTREYPPEVYGGAGVHVTELVAYLRRLCAVDVHCMGAPRPGAFAYRPDPRLGSANAALSTLSADLVMANAASAATVVHSHTWYTALAGHLAAILYDIPHVLTAHSLEPLRPWKKEQLGGGYQVSTWVEQTAVLAANAVIAVSSAMRNDMLRVYPSLDPNLVHVIRNGIDTETWYPAGPARTGSVLAELGVDPNRPMAVFVGRITRQKGVVHLVTAAHRFRSDVQLVLCAGAADTPEVADEVRVAVAELARNRTGVFWIQDRLTIGQLREILSAATVFVCPSVYEPLGIVNLEAMACATAVVASDVGGIPEVVADGITGSLVHYDADDATGYQARLAEAVNALVADPATAERYGHAGRQRCIQEFSWAYIAEQTLDIYRKVCA</sequence>
<reference key="1">
    <citation type="journal article" date="2002" name="J. Bacteriol.">
        <title>Whole-genome comparison of Mycobacterium tuberculosis clinical and laboratory strains.</title>
        <authorList>
            <person name="Fleischmann R.D."/>
            <person name="Alland D."/>
            <person name="Eisen J.A."/>
            <person name="Carpenter L."/>
            <person name="White O."/>
            <person name="Peterson J.D."/>
            <person name="DeBoy R.T."/>
            <person name="Dodson R.J."/>
            <person name="Gwinn M.L."/>
            <person name="Haft D.H."/>
            <person name="Hickey E.K."/>
            <person name="Kolonay J.F."/>
            <person name="Nelson W.C."/>
            <person name="Umayam L.A."/>
            <person name="Ermolaeva M.D."/>
            <person name="Salzberg S.L."/>
            <person name="Delcher A."/>
            <person name="Utterback T.R."/>
            <person name="Weidman J.F."/>
            <person name="Khouri H.M."/>
            <person name="Gill J."/>
            <person name="Mikula A."/>
            <person name="Bishai W."/>
            <person name="Jacobs W.R. Jr."/>
            <person name="Venter J.C."/>
            <person name="Fraser C.M."/>
        </authorList>
    </citation>
    <scope>NUCLEOTIDE SEQUENCE [LARGE SCALE GENOMIC DNA]</scope>
    <source>
        <strain>CDC 1551 / Oshkosh</strain>
    </source>
</reference>
<dbReference type="EC" id="2.4.1.342" evidence="1"/>
<dbReference type="EMBL" id="AE000516">
    <property type="protein sequence ID" value="AAK45507.1"/>
    <property type="molecule type" value="Genomic_DNA"/>
</dbReference>
<dbReference type="PIR" id="B70610">
    <property type="entry name" value="B70610"/>
</dbReference>
<dbReference type="RefSeq" id="WP_003898773.1">
    <property type="nucleotide sequence ID" value="NZ_KK341227.1"/>
</dbReference>
<dbReference type="SMR" id="P9WMZ0"/>
<dbReference type="CAZy" id="GT4">
    <property type="family name" value="Glycosyltransferase Family 4"/>
</dbReference>
<dbReference type="KEGG" id="mtc:MT1250"/>
<dbReference type="PATRIC" id="fig|83331.31.peg.1351"/>
<dbReference type="HOGENOM" id="CLU_009583_2_3_11"/>
<dbReference type="UniPathway" id="UPA00164"/>
<dbReference type="UniPathway" id="UPA00934"/>
<dbReference type="Proteomes" id="UP000001020">
    <property type="component" value="Chromosome"/>
</dbReference>
<dbReference type="GO" id="GO:0016757">
    <property type="term" value="F:glycosyltransferase activity"/>
    <property type="evidence" value="ECO:0007669"/>
    <property type="project" value="UniProtKB-KW"/>
</dbReference>
<dbReference type="GO" id="GO:0045227">
    <property type="term" value="P:capsule polysaccharide biosynthetic process"/>
    <property type="evidence" value="ECO:0007669"/>
    <property type="project" value="UniProtKB-UniPathway"/>
</dbReference>
<dbReference type="GO" id="GO:0005978">
    <property type="term" value="P:glycogen biosynthetic process"/>
    <property type="evidence" value="ECO:0007669"/>
    <property type="project" value="UniProtKB-UniPathway"/>
</dbReference>
<dbReference type="CDD" id="cd03801">
    <property type="entry name" value="GT4_PimA-like"/>
    <property type="match status" value="1"/>
</dbReference>
<dbReference type="Gene3D" id="3.40.50.2000">
    <property type="entry name" value="Glycogen Phosphorylase B"/>
    <property type="match status" value="2"/>
</dbReference>
<dbReference type="InterPro" id="IPR001296">
    <property type="entry name" value="Glyco_trans_1"/>
</dbReference>
<dbReference type="InterPro" id="IPR028098">
    <property type="entry name" value="Glyco_trans_4-like_N"/>
</dbReference>
<dbReference type="InterPro" id="IPR011875">
    <property type="entry name" value="M1P_synthase"/>
</dbReference>
<dbReference type="NCBIfam" id="TIGR02149">
    <property type="entry name" value="glgA_Coryne"/>
    <property type="match status" value="1"/>
</dbReference>
<dbReference type="PANTHER" id="PTHR12526:SF590">
    <property type="entry name" value="ALPHA-MALTOSE-1-PHOSPHATE SYNTHASE"/>
    <property type="match status" value="1"/>
</dbReference>
<dbReference type="PANTHER" id="PTHR12526">
    <property type="entry name" value="GLYCOSYLTRANSFERASE"/>
    <property type="match status" value="1"/>
</dbReference>
<dbReference type="Pfam" id="PF13439">
    <property type="entry name" value="Glyco_transf_4"/>
    <property type="match status" value="1"/>
</dbReference>
<dbReference type="Pfam" id="PF00534">
    <property type="entry name" value="Glycos_transf_1"/>
    <property type="match status" value="1"/>
</dbReference>
<dbReference type="SUPFAM" id="SSF53756">
    <property type="entry name" value="UDP-Glycosyltransferase/glycogen phosphorylase"/>
    <property type="match status" value="1"/>
</dbReference>
<protein>
    <recommendedName>
        <fullName evidence="1">Alpha-maltose-1-phosphate synthase</fullName>
        <shortName evidence="1">M1P synthase</shortName>
        <ecNumber evidence="1">2.4.1.342</ecNumber>
    </recommendedName>
    <alternativeName>
        <fullName evidence="1">ADP-alpha-D-glucose:alpha-D-glucose-1-phosphate 4-alpha-D-glucosyltransferase</fullName>
    </alternativeName>
    <alternativeName>
        <fullName evidence="1">M1P-producing glucosyltransferase</fullName>
    </alternativeName>
</protein>
<evidence type="ECO:0000250" key="1">
    <source>
        <dbReference type="UniProtKB" id="P9WMZ1"/>
    </source>
</evidence>
<evidence type="ECO:0000305" key="2"/>
<feature type="chain" id="PRO_0000427218" description="Alpha-maltose-1-phosphate synthase">
    <location>
        <begin position="1"/>
        <end position="387"/>
    </location>
</feature>